<evidence type="ECO:0000255" key="1">
    <source>
        <dbReference type="HAMAP-Rule" id="MF_00086"/>
    </source>
</evidence>
<reference key="1">
    <citation type="journal article" date="2007" name="PLoS Genet.">
        <title>Patterns and implications of gene gain and loss in the evolution of Prochlorococcus.</title>
        <authorList>
            <person name="Kettler G.C."/>
            <person name="Martiny A.C."/>
            <person name="Huang K."/>
            <person name="Zucker J."/>
            <person name="Coleman M.L."/>
            <person name="Rodrigue S."/>
            <person name="Chen F."/>
            <person name="Lapidus A."/>
            <person name="Ferriera S."/>
            <person name="Johnson J."/>
            <person name="Steglich C."/>
            <person name="Church G.M."/>
            <person name="Richardson P."/>
            <person name="Chisholm S.W."/>
        </authorList>
    </citation>
    <scope>NUCLEOTIDE SEQUENCE [LARGE SCALE GENOMIC DNA]</scope>
    <source>
        <strain>MIT 9301</strain>
    </source>
</reference>
<name>METK_PROM0</name>
<gene>
    <name evidence="1" type="primary">metK</name>
    <name type="ordered locus">P9301_03361</name>
</gene>
<protein>
    <recommendedName>
        <fullName evidence="1">S-adenosylmethionine synthase</fullName>
        <shortName evidence="1">AdoMet synthase</shortName>
        <ecNumber evidence="1">2.5.1.6</ecNumber>
    </recommendedName>
    <alternativeName>
        <fullName evidence="1">MAT</fullName>
    </alternativeName>
    <alternativeName>
        <fullName evidence="1">Methionine adenosyltransferase</fullName>
    </alternativeName>
</protein>
<comment type="function">
    <text evidence="1">Catalyzes the formation of S-adenosylmethionine (AdoMet) from methionine and ATP. The overall synthetic reaction is composed of two sequential steps, AdoMet formation and the subsequent tripolyphosphate hydrolysis which occurs prior to release of AdoMet from the enzyme.</text>
</comment>
<comment type="catalytic activity">
    <reaction evidence="1">
        <text>L-methionine + ATP + H2O = S-adenosyl-L-methionine + phosphate + diphosphate</text>
        <dbReference type="Rhea" id="RHEA:21080"/>
        <dbReference type="ChEBI" id="CHEBI:15377"/>
        <dbReference type="ChEBI" id="CHEBI:30616"/>
        <dbReference type="ChEBI" id="CHEBI:33019"/>
        <dbReference type="ChEBI" id="CHEBI:43474"/>
        <dbReference type="ChEBI" id="CHEBI:57844"/>
        <dbReference type="ChEBI" id="CHEBI:59789"/>
        <dbReference type="EC" id="2.5.1.6"/>
    </reaction>
</comment>
<comment type="cofactor">
    <cofactor evidence="1">
        <name>Mg(2+)</name>
        <dbReference type="ChEBI" id="CHEBI:18420"/>
    </cofactor>
    <text evidence="1">Binds 2 divalent ions per subunit.</text>
</comment>
<comment type="cofactor">
    <cofactor evidence="1">
        <name>K(+)</name>
        <dbReference type="ChEBI" id="CHEBI:29103"/>
    </cofactor>
    <text evidence="1">Binds 1 potassium ion per subunit.</text>
</comment>
<comment type="pathway">
    <text evidence="1">Amino-acid biosynthesis; S-adenosyl-L-methionine biosynthesis; S-adenosyl-L-methionine from L-methionine: step 1/1.</text>
</comment>
<comment type="subunit">
    <text evidence="1">Homotetramer; dimer of dimers.</text>
</comment>
<comment type="subcellular location">
    <subcellularLocation>
        <location evidence="1">Cytoplasm</location>
    </subcellularLocation>
</comment>
<comment type="similarity">
    <text evidence="1">Belongs to the AdoMet synthase family.</text>
</comment>
<keyword id="KW-0067">ATP-binding</keyword>
<keyword id="KW-0963">Cytoplasm</keyword>
<keyword id="KW-0460">Magnesium</keyword>
<keyword id="KW-0479">Metal-binding</keyword>
<keyword id="KW-0547">Nucleotide-binding</keyword>
<keyword id="KW-0554">One-carbon metabolism</keyword>
<keyword id="KW-0630">Potassium</keyword>
<keyword id="KW-1185">Reference proteome</keyword>
<keyword id="KW-0808">Transferase</keyword>
<dbReference type="EC" id="2.5.1.6" evidence="1"/>
<dbReference type="EMBL" id="CP000576">
    <property type="protein sequence ID" value="ABO16959.1"/>
    <property type="molecule type" value="Genomic_DNA"/>
</dbReference>
<dbReference type="RefSeq" id="WP_011862348.1">
    <property type="nucleotide sequence ID" value="NC_009091.1"/>
</dbReference>
<dbReference type="SMR" id="A3PB34"/>
<dbReference type="STRING" id="167546.P9301_03361"/>
<dbReference type="KEGG" id="pmg:P9301_03361"/>
<dbReference type="eggNOG" id="COG0192">
    <property type="taxonomic scope" value="Bacteria"/>
</dbReference>
<dbReference type="HOGENOM" id="CLU_041802_1_1_3"/>
<dbReference type="OrthoDB" id="9801686at2"/>
<dbReference type="UniPathway" id="UPA00315">
    <property type="reaction ID" value="UER00080"/>
</dbReference>
<dbReference type="Proteomes" id="UP000001430">
    <property type="component" value="Chromosome"/>
</dbReference>
<dbReference type="GO" id="GO:0005737">
    <property type="term" value="C:cytoplasm"/>
    <property type="evidence" value="ECO:0007669"/>
    <property type="project" value="UniProtKB-SubCell"/>
</dbReference>
<dbReference type="GO" id="GO:0005524">
    <property type="term" value="F:ATP binding"/>
    <property type="evidence" value="ECO:0007669"/>
    <property type="project" value="UniProtKB-UniRule"/>
</dbReference>
<dbReference type="GO" id="GO:0000287">
    <property type="term" value="F:magnesium ion binding"/>
    <property type="evidence" value="ECO:0007669"/>
    <property type="project" value="UniProtKB-UniRule"/>
</dbReference>
<dbReference type="GO" id="GO:0004478">
    <property type="term" value="F:methionine adenosyltransferase activity"/>
    <property type="evidence" value="ECO:0007669"/>
    <property type="project" value="UniProtKB-UniRule"/>
</dbReference>
<dbReference type="GO" id="GO:0006730">
    <property type="term" value="P:one-carbon metabolic process"/>
    <property type="evidence" value="ECO:0007669"/>
    <property type="project" value="UniProtKB-KW"/>
</dbReference>
<dbReference type="GO" id="GO:0006556">
    <property type="term" value="P:S-adenosylmethionine biosynthetic process"/>
    <property type="evidence" value="ECO:0007669"/>
    <property type="project" value="UniProtKB-UniRule"/>
</dbReference>
<dbReference type="CDD" id="cd18079">
    <property type="entry name" value="S-AdoMet_synt"/>
    <property type="match status" value="1"/>
</dbReference>
<dbReference type="FunFam" id="3.30.300.10:FF:000003">
    <property type="entry name" value="S-adenosylmethionine synthase"/>
    <property type="match status" value="1"/>
</dbReference>
<dbReference type="Gene3D" id="3.30.300.10">
    <property type="match status" value="3"/>
</dbReference>
<dbReference type="HAMAP" id="MF_00086">
    <property type="entry name" value="S_AdoMet_synth1"/>
    <property type="match status" value="1"/>
</dbReference>
<dbReference type="InterPro" id="IPR022631">
    <property type="entry name" value="ADOMET_SYNTHASE_CS"/>
</dbReference>
<dbReference type="InterPro" id="IPR022630">
    <property type="entry name" value="S-AdoMet_synt_C"/>
</dbReference>
<dbReference type="InterPro" id="IPR022629">
    <property type="entry name" value="S-AdoMet_synt_central"/>
</dbReference>
<dbReference type="InterPro" id="IPR022628">
    <property type="entry name" value="S-AdoMet_synt_N"/>
</dbReference>
<dbReference type="InterPro" id="IPR002133">
    <property type="entry name" value="S-AdoMet_synthetase"/>
</dbReference>
<dbReference type="InterPro" id="IPR022636">
    <property type="entry name" value="S-AdoMet_synthetase_sfam"/>
</dbReference>
<dbReference type="NCBIfam" id="TIGR01034">
    <property type="entry name" value="metK"/>
    <property type="match status" value="1"/>
</dbReference>
<dbReference type="PANTHER" id="PTHR11964">
    <property type="entry name" value="S-ADENOSYLMETHIONINE SYNTHETASE"/>
    <property type="match status" value="1"/>
</dbReference>
<dbReference type="Pfam" id="PF02773">
    <property type="entry name" value="S-AdoMet_synt_C"/>
    <property type="match status" value="1"/>
</dbReference>
<dbReference type="Pfam" id="PF02772">
    <property type="entry name" value="S-AdoMet_synt_M"/>
    <property type="match status" value="1"/>
</dbReference>
<dbReference type="Pfam" id="PF00438">
    <property type="entry name" value="S-AdoMet_synt_N"/>
    <property type="match status" value="1"/>
</dbReference>
<dbReference type="PIRSF" id="PIRSF000497">
    <property type="entry name" value="MAT"/>
    <property type="match status" value="1"/>
</dbReference>
<dbReference type="SUPFAM" id="SSF55973">
    <property type="entry name" value="S-adenosylmethionine synthetase"/>
    <property type="match status" value="3"/>
</dbReference>
<dbReference type="PROSITE" id="PS00376">
    <property type="entry name" value="ADOMET_SYNTHASE_1"/>
    <property type="match status" value="1"/>
</dbReference>
<dbReference type="PROSITE" id="PS00377">
    <property type="entry name" value="ADOMET_SYNTHASE_2"/>
    <property type="match status" value="1"/>
</dbReference>
<proteinExistence type="inferred from homology"/>
<accession>A3PB34</accession>
<sequence length="413" mass="45217">MSDFIFTSESVTEGHPDKICDQISDAVLDALLTEDPESRVACETVVNTGLCLLTGEITSKAKVDYIKLVRNVIKEIGYEGYRAGGFDANSCAVLVALDEQSPDISQGVNDADDINDDLEDNTGAGDQGIMFGYACDETPELMPLPISLAHRLAIQLAKVRHEEVLNYLLPDGKTQVSIDYEKGLPVSINTILISTQHNSEIDGVTNEEEIRQRIKEDLWKNVVIPATEDLEIKPNISKTRFLVNPTGKFVVGGPQGDAGLTGRKIIVDTYGGYARHGGGAFSGKDPTKVDRSAAYAARYVAKSIVKAKLAKKAEVQLSYAIGVAKPISILVETFDTGVISQNNLTELIKEHFDLRPAAIIKEFNLRNLPKKMGGKFFRKTASYGHFGRRDLELPWENVEEKAAKLAEASKIFL</sequence>
<organism>
    <name type="scientific">Prochlorococcus marinus (strain MIT 9301)</name>
    <dbReference type="NCBI Taxonomy" id="167546"/>
    <lineage>
        <taxon>Bacteria</taxon>
        <taxon>Bacillati</taxon>
        <taxon>Cyanobacteriota</taxon>
        <taxon>Cyanophyceae</taxon>
        <taxon>Synechococcales</taxon>
        <taxon>Prochlorococcaceae</taxon>
        <taxon>Prochlorococcus</taxon>
    </lineage>
</organism>
<feature type="chain" id="PRO_0000302959" description="S-adenosylmethionine synthase">
    <location>
        <begin position="1"/>
        <end position="413"/>
    </location>
</feature>
<feature type="region of interest" description="Flexible loop" evidence="1">
    <location>
        <begin position="100"/>
        <end position="110"/>
    </location>
</feature>
<feature type="binding site" description="in other chain" evidence="1">
    <location>
        <position position="15"/>
    </location>
    <ligand>
        <name>ATP</name>
        <dbReference type="ChEBI" id="CHEBI:30616"/>
        <note>ligand shared between two neighboring subunits</note>
    </ligand>
</feature>
<feature type="binding site" evidence="1">
    <location>
        <position position="17"/>
    </location>
    <ligand>
        <name>Mg(2+)</name>
        <dbReference type="ChEBI" id="CHEBI:18420"/>
    </ligand>
</feature>
<feature type="binding site" evidence="1">
    <location>
        <position position="43"/>
    </location>
    <ligand>
        <name>K(+)</name>
        <dbReference type="ChEBI" id="CHEBI:29103"/>
    </ligand>
</feature>
<feature type="binding site" description="in other chain" evidence="1">
    <location>
        <position position="56"/>
    </location>
    <ligand>
        <name>L-methionine</name>
        <dbReference type="ChEBI" id="CHEBI:57844"/>
        <note>ligand shared between two neighboring subunits</note>
    </ligand>
</feature>
<feature type="binding site" description="in other chain" evidence="1">
    <location>
        <position position="100"/>
    </location>
    <ligand>
        <name>L-methionine</name>
        <dbReference type="ChEBI" id="CHEBI:57844"/>
        <note>ligand shared between two neighboring subunits</note>
    </ligand>
</feature>
<feature type="binding site" description="in other chain" evidence="1">
    <location>
        <begin position="171"/>
        <end position="173"/>
    </location>
    <ligand>
        <name>ATP</name>
        <dbReference type="ChEBI" id="CHEBI:30616"/>
        <note>ligand shared between two neighboring subunits</note>
    </ligand>
</feature>
<feature type="binding site" description="in other chain" evidence="1">
    <location>
        <begin position="248"/>
        <end position="249"/>
    </location>
    <ligand>
        <name>ATP</name>
        <dbReference type="ChEBI" id="CHEBI:30616"/>
        <note>ligand shared between two neighboring subunits</note>
    </ligand>
</feature>
<feature type="binding site" evidence="1">
    <location>
        <position position="257"/>
    </location>
    <ligand>
        <name>ATP</name>
        <dbReference type="ChEBI" id="CHEBI:30616"/>
        <note>ligand shared between two neighboring subunits</note>
    </ligand>
</feature>
<feature type="binding site" evidence="1">
    <location>
        <position position="257"/>
    </location>
    <ligand>
        <name>L-methionine</name>
        <dbReference type="ChEBI" id="CHEBI:57844"/>
        <note>ligand shared between two neighboring subunits</note>
    </ligand>
</feature>
<feature type="binding site" description="in other chain" evidence="1">
    <location>
        <begin position="263"/>
        <end position="264"/>
    </location>
    <ligand>
        <name>ATP</name>
        <dbReference type="ChEBI" id="CHEBI:30616"/>
        <note>ligand shared between two neighboring subunits</note>
    </ligand>
</feature>
<feature type="binding site" evidence="1">
    <location>
        <position position="280"/>
    </location>
    <ligand>
        <name>ATP</name>
        <dbReference type="ChEBI" id="CHEBI:30616"/>
        <note>ligand shared between two neighboring subunits</note>
    </ligand>
</feature>
<feature type="binding site" evidence="1">
    <location>
        <position position="284"/>
    </location>
    <ligand>
        <name>ATP</name>
        <dbReference type="ChEBI" id="CHEBI:30616"/>
        <note>ligand shared between two neighboring subunits</note>
    </ligand>
</feature>
<feature type="binding site" description="in other chain" evidence="1">
    <location>
        <position position="288"/>
    </location>
    <ligand>
        <name>L-methionine</name>
        <dbReference type="ChEBI" id="CHEBI:57844"/>
        <note>ligand shared between two neighboring subunits</note>
    </ligand>
</feature>